<proteinExistence type="evidence at protein level"/>
<comment type="similarity">
    <text evidence="1">Belongs to the UPF0340 family.</text>
</comment>
<name>Y583_THET8</name>
<evidence type="ECO:0000255" key="1">
    <source>
        <dbReference type="HAMAP-Rule" id="MF_00800"/>
    </source>
</evidence>
<accession>P68591</accession>
<accession>Q5SKR0</accession>
<keyword id="KW-0002">3D-structure</keyword>
<keyword id="KW-1185">Reference proteome</keyword>
<sequence length="196" mass="21003">MEGIRRAAQRAAEEFLQAFPMAPGSLFVLGGSTSEVLGERVGTRPSLEAAHAVLEGLLPPLLERGVHVAVQACEHLNRALVVERETARAFGLEEVAVFPHPKAGGALATAAFLRFRDPVMVESLKAQAHGGMDIGGVLIGMHLRPVAVPLRLSVRKIGEAVLLAAKTRPKLVGGARAVYTREEMLKKLEEFLPKPP</sequence>
<organism>
    <name type="scientific">Thermus thermophilus (strain ATCC 27634 / DSM 579 / HB8)</name>
    <dbReference type="NCBI Taxonomy" id="300852"/>
    <lineage>
        <taxon>Bacteria</taxon>
        <taxon>Thermotogati</taxon>
        <taxon>Deinococcota</taxon>
        <taxon>Deinococci</taxon>
        <taxon>Thermales</taxon>
        <taxon>Thermaceae</taxon>
        <taxon>Thermus</taxon>
    </lineage>
</organism>
<feature type="chain" id="PRO_0000213031" description="UPF0340 protein TTHA0583">
    <location>
        <begin position="1"/>
        <end position="196"/>
    </location>
</feature>
<reference key="1">
    <citation type="submission" date="2004-11" db="EMBL/GenBank/DDBJ databases">
        <title>Complete genome sequence of Thermus thermophilus HB8.</title>
        <authorList>
            <person name="Masui R."/>
            <person name="Kurokawa K."/>
            <person name="Nakagawa N."/>
            <person name="Tokunaga F."/>
            <person name="Koyama Y."/>
            <person name="Shibata T."/>
            <person name="Oshima T."/>
            <person name="Yokoyama S."/>
            <person name="Yasunaga T."/>
            <person name="Kuramitsu S."/>
        </authorList>
    </citation>
    <scope>NUCLEOTIDE SEQUENCE [LARGE SCALE GENOMIC DNA]</scope>
    <source>
        <strain>ATCC 27634 / DSM 579 / HB8</strain>
    </source>
</reference>
<reference key="2">
    <citation type="submission" date="2004-01" db="PDB data bank">
        <title>Crystal structure of the conserved hypothetical protein TT1679 from Thermus thermophilus HB8.</title>
        <authorList>
            <person name="Kishishita S."/>
            <person name="Terada T."/>
            <person name="Shirouzu M."/>
            <person name="Kuramitsu S."/>
            <person name="Yokoyama S."/>
        </authorList>
    </citation>
    <scope>X-RAY CRYSTALLOGRAPHY (2.16 ANGSTROMS)</scope>
</reference>
<gene>
    <name type="ordered locus">TTHA0583</name>
</gene>
<dbReference type="EMBL" id="AP008226">
    <property type="protein sequence ID" value="BAD70406.1"/>
    <property type="molecule type" value="Genomic_DNA"/>
</dbReference>
<dbReference type="RefSeq" id="WP_011228042.1">
    <property type="nucleotide sequence ID" value="NC_006461.1"/>
</dbReference>
<dbReference type="RefSeq" id="YP_143849.1">
    <property type="nucleotide sequence ID" value="NC_006461.1"/>
</dbReference>
<dbReference type="PDB" id="1V8D">
    <property type="method" value="X-ray"/>
    <property type="resolution" value="2.16 A"/>
    <property type="chains" value="A/B/C=1-196"/>
</dbReference>
<dbReference type="PDBsum" id="1V8D"/>
<dbReference type="SMR" id="P68591"/>
<dbReference type="EnsemblBacteria" id="BAD70406">
    <property type="protein sequence ID" value="BAD70406"/>
    <property type="gene ID" value="BAD70406"/>
</dbReference>
<dbReference type="GeneID" id="3168581"/>
<dbReference type="KEGG" id="ttj:TTHA0583"/>
<dbReference type="PATRIC" id="fig|300852.9.peg.581"/>
<dbReference type="eggNOG" id="COG4475">
    <property type="taxonomic scope" value="Bacteria"/>
</dbReference>
<dbReference type="HOGENOM" id="CLU_106658_0_0_0"/>
<dbReference type="PhylomeDB" id="P68591"/>
<dbReference type="Proteomes" id="UP000000532">
    <property type="component" value="Chromosome"/>
</dbReference>
<dbReference type="Gene3D" id="3.40.50.10360">
    <property type="entry name" value="Hypothetical protein TT1679"/>
    <property type="match status" value="1"/>
</dbReference>
<dbReference type="HAMAP" id="MF_00800">
    <property type="entry name" value="UPF0340"/>
    <property type="match status" value="1"/>
</dbReference>
<dbReference type="InterPro" id="IPR028345">
    <property type="entry name" value="Antibiotic_NAT-like"/>
</dbReference>
<dbReference type="InterPro" id="IPR006340">
    <property type="entry name" value="DUF436"/>
</dbReference>
<dbReference type="NCBIfam" id="TIGR01440">
    <property type="entry name" value="TIGR01440 family protein"/>
    <property type="match status" value="1"/>
</dbReference>
<dbReference type="Pfam" id="PF04260">
    <property type="entry name" value="DUF436"/>
    <property type="match status" value="1"/>
</dbReference>
<dbReference type="PIRSF" id="PIRSF007510">
    <property type="entry name" value="UCP007510"/>
    <property type="match status" value="1"/>
</dbReference>
<dbReference type="SUPFAM" id="SSF110710">
    <property type="entry name" value="TTHA0583/YokD-like"/>
    <property type="match status" value="1"/>
</dbReference>
<protein>
    <recommendedName>
        <fullName evidence="1">UPF0340 protein TTHA0583</fullName>
    </recommendedName>
    <alternativeName>
        <fullName>TT1679</fullName>
    </alternativeName>
</protein>